<evidence type="ECO:0000255" key="1">
    <source>
        <dbReference type="HAMAP-Rule" id="MF_01196"/>
    </source>
</evidence>
<evidence type="ECO:0000256" key="2">
    <source>
        <dbReference type="SAM" id="MobiDB-lite"/>
    </source>
</evidence>
<evidence type="ECO:0000305" key="3"/>
<feature type="chain" id="PRO_0000333900" description="Cell division protein ZapB">
    <location>
        <begin position="1"/>
        <end position="81"/>
    </location>
</feature>
<feature type="region of interest" description="Disordered" evidence="2">
    <location>
        <begin position="36"/>
        <end position="67"/>
    </location>
</feature>
<feature type="coiled-coil region" evidence="1">
    <location>
        <begin position="5"/>
        <end position="81"/>
    </location>
</feature>
<feature type="compositionally biased region" description="Polar residues" evidence="2">
    <location>
        <begin position="37"/>
        <end position="47"/>
    </location>
</feature>
<feature type="compositionally biased region" description="Basic and acidic residues" evidence="2">
    <location>
        <begin position="48"/>
        <end position="62"/>
    </location>
</feature>
<feature type="modified residue" description="N6-acetyllysine" evidence="1">
    <location>
        <position position="10"/>
    </location>
</feature>
<sequence>MTMSLEVFEKLEAKVQQAIDTITLLQMEIEELKEKNNSLSQEVQNAQHQREELERENNHLKEQQNGWQERLQALLGRMEEV</sequence>
<keyword id="KW-0007">Acetylation</keyword>
<keyword id="KW-0131">Cell cycle</keyword>
<keyword id="KW-0132">Cell division</keyword>
<keyword id="KW-0175">Coiled coil</keyword>
<keyword id="KW-0963">Cytoplasm</keyword>
<keyword id="KW-1185">Reference proteome</keyword>
<keyword id="KW-0717">Septation</keyword>
<reference key="1">
    <citation type="journal article" date="2008" name="J. Bacteriol.">
        <title>The pangenome structure of Escherichia coli: comparative genomic analysis of E. coli commensal and pathogenic isolates.</title>
        <authorList>
            <person name="Rasko D.A."/>
            <person name="Rosovitz M.J."/>
            <person name="Myers G.S.A."/>
            <person name="Mongodin E.F."/>
            <person name="Fricke W.F."/>
            <person name="Gajer P."/>
            <person name="Crabtree J."/>
            <person name="Sebaihia M."/>
            <person name="Thomson N.R."/>
            <person name="Chaudhuri R."/>
            <person name="Henderson I.R."/>
            <person name="Sperandio V."/>
            <person name="Ravel J."/>
        </authorList>
    </citation>
    <scope>NUCLEOTIDE SEQUENCE [LARGE SCALE GENOMIC DNA]</scope>
    <source>
        <strain>E24377A / ETEC</strain>
    </source>
</reference>
<accession>A7ZUE3</accession>
<comment type="function">
    <text evidence="1">Non-essential, abundant cell division factor that is required for proper Z-ring formation. It is recruited early to the divisome by direct interaction with FtsZ, stimulating Z-ring assembly and thereby promoting cell division earlier in the cell cycle. Its recruitment to the Z-ring requires functional FtsA or ZipA.</text>
</comment>
<comment type="subunit">
    <text evidence="1">Homodimer. The ends of the coiled-coil dimer bind to each other, forming polymers. Interacts with FtsZ.</text>
</comment>
<comment type="subcellular location">
    <subcellularLocation>
        <location>Cytoplasm</location>
    </subcellularLocation>
    <text evidence="1">Localizes to the septum at mid-cell, in a FtsZ-like pattern.</text>
</comment>
<comment type="similarity">
    <text evidence="1">Belongs to the ZapB family.</text>
</comment>
<comment type="sequence caution" evidence="3">
    <conflict type="erroneous initiation">
        <sequence resource="EMBL-CDS" id="ABV18304"/>
    </conflict>
</comment>
<organism>
    <name type="scientific">Escherichia coli O139:H28 (strain E24377A / ETEC)</name>
    <dbReference type="NCBI Taxonomy" id="331111"/>
    <lineage>
        <taxon>Bacteria</taxon>
        <taxon>Pseudomonadati</taxon>
        <taxon>Pseudomonadota</taxon>
        <taxon>Gammaproteobacteria</taxon>
        <taxon>Enterobacterales</taxon>
        <taxon>Enterobacteriaceae</taxon>
        <taxon>Escherichia</taxon>
    </lineage>
</organism>
<dbReference type="EMBL" id="CP000800">
    <property type="protein sequence ID" value="ABV18304.1"/>
    <property type="status" value="ALT_INIT"/>
    <property type="molecule type" value="Genomic_DNA"/>
</dbReference>
<dbReference type="RefSeq" id="WP_001296623.1">
    <property type="nucleotide sequence ID" value="NC_009801.1"/>
</dbReference>
<dbReference type="SMR" id="A7ZUE3"/>
<dbReference type="GeneID" id="93777970"/>
<dbReference type="KEGG" id="ecw:EcE24377A_4463"/>
<dbReference type="HOGENOM" id="CLU_171174_2_0_6"/>
<dbReference type="Proteomes" id="UP000001122">
    <property type="component" value="Chromosome"/>
</dbReference>
<dbReference type="GO" id="GO:0005737">
    <property type="term" value="C:cytoplasm"/>
    <property type="evidence" value="ECO:0007669"/>
    <property type="project" value="UniProtKB-SubCell"/>
</dbReference>
<dbReference type="GO" id="GO:0000917">
    <property type="term" value="P:division septum assembly"/>
    <property type="evidence" value="ECO:0007669"/>
    <property type="project" value="UniProtKB-KW"/>
</dbReference>
<dbReference type="GO" id="GO:0043093">
    <property type="term" value="P:FtsZ-dependent cytokinesis"/>
    <property type="evidence" value="ECO:0007669"/>
    <property type="project" value="UniProtKB-UniRule"/>
</dbReference>
<dbReference type="FunFam" id="1.20.5.340:FF:000014">
    <property type="entry name" value="Cell division protein ZapB"/>
    <property type="match status" value="1"/>
</dbReference>
<dbReference type="Gene3D" id="1.20.5.340">
    <property type="match status" value="1"/>
</dbReference>
<dbReference type="HAMAP" id="MF_01196">
    <property type="entry name" value="ZapB"/>
    <property type="match status" value="1"/>
</dbReference>
<dbReference type="InterPro" id="IPR009252">
    <property type="entry name" value="Cell_div_ZapB"/>
</dbReference>
<dbReference type="NCBIfam" id="NF011951">
    <property type="entry name" value="PRK15422.1"/>
    <property type="match status" value="1"/>
</dbReference>
<dbReference type="Pfam" id="PF06005">
    <property type="entry name" value="ZapB"/>
    <property type="match status" value="1"/>
</dbReference>
<protein>
    <recommendedName>
        <fullName evidence="1">Cell division protein ZapB</fullName>
    </recommendedName>
</protein>
<proteinExistence type="inferred from homology"/>
<name>ZAPB_ECO24</name>
<gene>
    <name evidence="1" type="primary">zapB</name>
    <name type="ordered locus">EcE24377A_4463</name>
</gene>